<feature type="chain" id="PRO_1000051442" description="Asparagine--tRNA ligase">
    <location>
        <begin position="1"/>
        <end position="448"/>
    </location>
</feature>
<dbReference type="EC" id="6.1.1.22" evidence="1"/>
<dbReference type="EMBL" id="CP000261">
    <property type="protein sequence ID" value="ABF35601.1"/>
    <property type="molecule type" value="Genomic_DNA"/>
</dbReference>
<dbReference type="SMR" id="Q1JCQ7"/>
<dbReference type="KEGG" id="spj:MGAS2096_Spy0549"/>
<dbReference type="HOGENOM" id="CLU_004553_2_0_9"/>
<dbReference type="GO" id="GO:0005737">
    <property type="term" value="C:cytoplasm"/>
    <property type="evidence" value="ECO:0007669"/>
    <property type="project" value="UniProtKB-SubCell"/>
</dbReference>
<dbReference type="GO" id="GO:0004816">
    <property type="term" value="F:asparagine-tRNA ligase activity"/>
    <property type="evidence" value="ECO:0007669"/>
    <property type="project" value="UniProtKB-UniRule"/>
</dbReference>
<dbReference type="GO" id="GO:0005524">
    <property type="term" value="F:ATP binding"/>
    <property type="evidence" value="ECO:0007669"/>
    <property type="project" value="UniProtKB-UniRule"/>
</dbReference>
<dbReference type="GO" id="GO:0140096">
    <property type="term" value="F:catalytic activity, acting on a protein"/>
    <property type="evidence" value="ECO:0007669"/>
    <property type="project" value="UniProtKB-ARBA"/>
</dbReference>
<dbReference type="GO" id="GO:0003676">
    <property type="term" value="F:nucleic acid binding"/>
    <property type="evidence" value="ECO:0007669"/>
    <property type="project" value="InterPro"/>
</dbReference>
<dbReference type="GO" id="GO:0016740">
    <property type="term" value="F:transferase activity"/>
    <property type="evidence" value="ECO:0007669"/>
    <property type="project" value="UniProtKB-ARBA"/>
</dbReference>
<dbReference type="GO" id="GO:0006421">
    <property type="term" value="P:asparaginyl-tRNA aminoacylation"/>
    <property type="evidence" value="ECO:0007669"/>
    <property type="project" value="UniProtKB-UniRule"/>
</dbReference>
<dbReference type="CDD" id="cd04323">
    <property type="entry name" value="AsnRS_cyto_like_N"/>
    <property type="match status" value="1"/>
</dbReference>
<dbReference type="CDD" id="cd00776">
    <property type="entry name" value="AsxRS_core"/>
    <property type="match status" value="1"/>
</dbReference>
<dbReference type="Gene3D" id="3.30.930.10">
    <property type="entry name" value="Bira Bifunctional Protein, Domain 2"/>
    <property type="match status" value="1"/>
</dbReference>
<dbReference type="Gene3D" id="2.40.50.140">
    <property type="entry name" value="Nucleic acid-binding proteins"/>
    <property type="match status" value="1"/>
</dbReference>
<dbReference type="HAMAP" id="MF_00534">
    <property type="entry name" value="Asn_tRNA_synth"/>
    <property type="match status" value="1"/>
</dbReference>
<dbReference type="InterPro" id="IPR004364">
    <property type="entry name" value="Aa-tRNA-synt_II"/>
</dbReference>
<dbReference type="InterPro" id="IPR006195">
    <property type="entry name" value="aa-tRNA-synth_II"/>
</dbReference>
<dbReference type="InterPro" id="IPR045864">
    <property type="entry name" value="aa-tRNA-synth_II/BPL/LPL"/>
</dbReference>
<dbReference type="InterPro" id="IPR004522">
    <property type="entry name" value="Asn-tRNA-ligase"/>
</dbReference>
<dbReference type="InterPro" id="IPR002312">
    <property type="entry name" value="Asp/Asn-tRNA-synth_IIb"/>
</dbReference>
<dbReference type="InterPro" id="IPR012340">
    <property type="entry name" value="NA-bd_OB-fold"/>
</dbReference>
<dbReference type="InterPro" id="IPR004365">
    <property type="entry name" value="NA-bd_OB_tRNA"/>
</dbReference>
<dbReference type="NCBIfam" id="TIGR00457">
    <property type="entry name" value="asnS"/>
    <property type="match status" value="1"/>
</dbReference>
<dbReference type="NCBIfam" id="NF003037">
    <property type="entry name" value="PRK03932.1"/>
    <property type="match status" value="1"/>
</dbReference>
<dbReference type="PANTHER" id="PTHR22594:SF34">
    <property type="entry name" value="ASPARAGINE--TRNA LIGASE, MITOCHONDRIAL-RELATED"/>
    <property type="match status" value="1"/>
</dbReference>
<dbReference type="PANTHER" id="PTHR22594">
    <property type="entry name" value="ASPARTYL/LYSYL-TRNA SYNTHETASE"/>
    <property type="match status" value="1"/>
</dbReference>
<dbReference type="Pfam" id="PF00152">
    <property type="entry name" value="tRNA-synt_2"/>
    <property type="match status" value="1"/>
</dbReference>
<dbReference type="Pfam" id="PF01336">
    <property type="entry name" value="tRNA_anti-codon"/>
    <property type="match status" value="1"/>
</dbReference>
<dbReference type="PRINTS" id="PR01042">
    <property type="entry name" value="TRNASYNTHASP"/>
</dbReference>
<dbReference type="SUPFAM" id="SSF55681">
    <property type="entry name" value="Class II aaRS and biotin synthetases"/>
    <property type="match status" value="1"/>
</dbReference>
<dbReference type="SUPFAM" id="SSF50249">
    <property type="entry name" value="Nucleic acid-binding proteins"/>
    <property type="match status" value="1"/>
</dbReference>
<dbReference type="PROSITE" id="PS50862">
    <property type="entry name" value="AA_TRNA_LIGASE_II"/>
    <property type="match status" value="1"/>
</dbReference>
<comment type="catalytic activity">
    <reaction evidence="1">
        <text>tRNA(Asn) + L-asparagine + ATP = L-asparaginyl-tRNA(Asn) + AMP + diphosphate + H(+)</text>
        <dbReference type="Rhea" id="RHEA:11180"/>
        <dbReference type="Rhea" id="RHEA-COMP:9659"/>
        <dbReference type="Rhea" id="RHEA-COMP:9674"/>
        <dbReference type="ChEBI" id="CHEBI:15378"/>
        <dbReference type="ChEBI" id="CHEBI:30616"/>
        <dbReference type="ChEBI" id="CHEBI:33019"/>
        <dbReference type="ChEBI" id="CHEBI:58048"/>
        <dbReference type="ChEBI" id="CHEBI:78442"/>
        <dbReference type="ChEBI" id="CHEBI:78515"/>
        <dbReference type="ChEBI" id="CHEBI:456215"/>
        <dbReference type="EC" id="6.1.1.22"/>
    </reaction>
</comment>
<comment type="subunit">
    <text evidence="1">Homodimer.</text>
</comment>
<comment type="subcellular location">
    <subcellularLocation>
        <location evidence="1">Cytoplasm</location>
    </subcellularLocation>
</comment>
<comment type="similarity">
    <text evidence="1">Belongs to the class-II aminoacyl-tRNA synthetase family.</text>
</comment>
<evidence type="ECO:0000255" key="1">
    <source>
        <dbReference type="HAMAP-Rule" id="MF_00534"/>
    </source>
</evidence>
<sequence>MSKKLISIVDVKDYVGQEVTIGAWVTNKSGKGKIAFVQLRDGSAFFQGVAFKPNFIEKYGEESGLEKFDVIKRLNQETSVYVTGIVKEDERSKFGYELDITDLEIIGESHEYPITPKEHGTDFLMDNRHLWLRSRKQMAVMQIRNAIIYATYEFFDQNGFIKFDSPILSENAAEDSTELFETDYFGKPAFLSQSGQLYLEAGAMALGRVFDFGPVFRAEKSKTRRHLTEFWMMDAEYSFLSHEESLDLQEAYVKALIQGVLDRAPQALDILERDVEALKRYITEPFKRVSYDDAITLLQEHEADEDTDYEHLEHGDDFGSPHETWISNYFGVPTFVVNYPASFKAFYMKPVPGNPERVLCADLLAPEGYGEIIGGSMREDNYDALVAKMDELGMDKSEYDFYLDLRKYGSVPHGGFGIGIERMVTFVAGTKHIREAIPFPRMLHRIRP</sequence>
<organism>
    <name type="scientific">Streptococcus pyogenes serotype M12 (strain MGAS2096)</name>
    <dbReference type="NCBI Taxonomy" id="370553"/>
    <lineage>
        <taxon>Bacteria</taxon>
        <taxon>Bacillati</taxon>
        <taxon>Bacillota</taxon>
        <taxon>Bacilli</taxon>
        <taxon>Lactobacillales</taxon>
        <taxon>Streptococcaceae</taxon>
        <taxon>Streptococcus</taxon>
    </lineage>
</organism>
<reference key="1">
    <citation type="journal article" date="2006" name="Proc. Natl. Acad. Sci. U.S.A.">
        <title>Molecular genetic anatomy of inter- and intraserotype variation in the human bacterial pathogen group A Streptococcus.</title>
        <authorList>
            <person name="Beres S.B."/>
            <person name="Richter E.W."/>
            <person name="Nagiec M.J."/>
            <person name="Sumby P."/>
            <person name="Porcella S.F."/>
            <person name="DeLeo F.R."/>
            <person name="Musser J.M."/>
        </authorList>
    </citation>
    <scope>NUCLEOTIDE SEQUENCE [LARGE SCALE GENOMIC DNA]</scope>
    <source>
        <strain>MGAS2096</strain>
    </source>
</reference>
<gene>
    <name evidence="1" type="primary">asnS</name>
    <name type="ordered locus">MGAS2096_Spy0549</name>
</gene>
<keyword id="KW-0030">Aminoacyl-tRNA synthetase</keyword>
<keyword id="KW-0067">ATP-binding</keyword>
<keyword id="KW-0963">Cytoplasm</keyword>
<keyword id="KW-0436">Ligase</keyword>
<keyword id="KW-0547">Nucleotide-binding</keyword>
<keyword id="KW-0648">Protein biosynthesis</keyword>
<protein>
    <recommendedName>
        <fullName evidence="1">Asparagine--tRNA ligase</fullName>
        <ecNumber evidence="1">6.1.1.22</ecNumber>
    </recommendedName>
    <alternativeName>
        <fullName evidence="1">Asparaginyl-tRNA synthetase</fullName>
        <shortName evidence="1">AsnRS</shortName>
    </alternativeName>
</protein>
<proteinExistence type="inferred from homology"/>
<name>SYN_STRPB</name>
<accession>Q1JCQ7</accession>